<proteinExistence type="inferred from homology"/>
<name>METE_BURO0</name>
<protein>
    <recommendedName>
        <fullName evidence="1">5-methyltetrahydropteroyltriglutamate--homocysteine methyltransferase</fullName>
        <ecNumber evidence="1">2.1.1.14</ecNumber>
    </recommendedName>
    <alternativeName>
        <fullName evidence="1">Cobalamin-independent methionine synthase</fullName>
    </alternativeName>
    <alternativeName>
        <fullName evidence="1">Methionine synthase, vitamin-B12 independent isozyme</fullName>
    </alternativeName>
</protein>
<reference key="1">
    <citation type="submission" date="2008-02" db="EMBL/GenBank/DDBJ databases">
        <title>Complete sequence of chromosome 2 of Burkholderia cenocepacia MC0-3.</title>
        <authorList>
            <person name="Copeland A."/>
            <person name="Lucas S."/>
            <person name="Lapidus A."/>
            <person name="Barry K."/>
            <person name="Bruce D."/>
            <person name="Goodwin L."/>
            <person name="Glavina del Rio T."/>
            <person name="Dalin E."/>
            <person name="Tice H."/>
            <person name="Pitluck S."/>
            <person name="Chain P."/>
            <person name="Malfatti S."/>
            <person name="Shin M."/>
            <person name="Vergez L."/>
            <person name="Schmutz J."/>
            <person name="Larimer F."/>
            <person name="Land M."/>
            <person name="Hauser L."/>
            <person name="Kyrpides N."/>
            <person name="Mikhailova N."/>
            <person name="Tiedje J."/>
            <person name="Richardson P."/>
        </authorList>
    </citation>
    <scope>NUCLEOTIDE SEQUENCE [LARGE SCALE GENOMIC DNA]</scope>
    <source>
        <strain>MC0-3</strain>
    </source>
</reference>
<evidence type="ECO:0000255" key="1">
    <source>
        <dbReference type="HAMAP-Rule" id="MF_00172"/>
    </source>
</evidence>
<keyword id="KW-0028">Amino-acid biosynthesis</keyword>
<keyword id="KW-0479">Metal-binding</keyword>
<keyword id="KW-0486">Methionine biosynthesis</keyword>
<keyword id="KW-0489">Methyltransferase</keyword>
<keyword id="KW-0677">Repeat</keyword>
<keyword id="KW-0808">Transferase</keyword>
<keyword id="KW-0862">Zinc</keyword>
<organism>
    <name type="scientific">Burkholderia orbicola (strain MC0-3)</name>
    <dbReference type="NCBI Taxonomy" id="406425"/>
    <lineage>
        <taxon>Bacteria</taxon>
        <taxon>Pseudomonadati</taxon>
        <taxon>Pseudomonadota</taxon>
        <taxon>Betaproteobacteria</taxon>
        <taxon>Burkholderiales</taxon>
        <taxon>Burkholderiaceae</taxon>
        <taxon>Burkholderia</taxon>
        <taxon>Burkholderia cepacia complex</taxon>
        <taxon>Burkholderia orbicola</taxon>
    </lineage>
</organism>
<sequence length="764" mass="85630">MVTTHNLGFPRIGAKRELKFGLERYWKGESSRDELKALGAELRRRHWHDQRDLDLAPIGDFAFYDQVLDMSFTLGNLPKRVQDFHGDALDNYFRVARGRSAQSAEEHAACCGGVAAGEMTKWFDTNYHYIVPEFHADTNFSLDPSRLLQQLAEANAQGVNAKPVILGPVTYLWLGKAKDDSDRLALLPKLLPVYGALLDTLTAQGVEWVQIDEPILVTELDAEWRQAFRIAYAALETRRIKLLLATYFGQLQDNLTLAASLPVDGLHIDAINARDEVDALVRELPAERVLSVGAINGRNIWKTDLNAALDWLEPLAKQLGDRLWLAPSCSLLHVPVDLASEEKLDAEIRSWLAFALQKLDELKVLATALNEGRDKVADALAANAAAIDSRRRSPRVNNPAVKAAIARIDARLGNRTSPYTQRASKQSARLNLPAFPTTTIGSFPQTAEIRQARSRFKAGALDEAGYRKAMQAEIERSVREQESLELDVLVHGEAERNDMVEYFGEQLDGYAFSQFGWVQSYGSRCVKPPILFGDISRPKAMTVEWIAYAQSLTRKPMKGMLTGPVTILNWSFVRDDQPRAVSCYQLALAIREEVLDLEKAGVRVIQIDEAALREGLPLRRAQWSEYLKWAVESFRITANGVQDDTQIHTHMCYSEFNDIIASIADMDADVITIETSRSDMELLDAFDTFKYPNEIGPGVYDIHSPNIPTQDHIVGLMRKAAERIPAERLWVNPDCGLKTRQWAEVIPALTNMVAAAKMLRNQVQ</sequence>
<feature type="chain" id="PRO_1000097818" description="5-methyltetrahydropteroyltriglutamate--homocysteine methyltransferase">
    <location>
        <begin position="1"/>
        <end position="764"/>
    </location>
</feature>
<feature type="active site" description="Proton donor" evidence="1">
    <location>
        <position position="703"/>
    </location>
</feature>
<feature type="binding site" evidence="1">
    <location>
        <begin position="16"/>
        <end position="19"/>
    </location>
    <ligand>
        <name>5-methyltetrahydropteroyltri-L-glutamate</name>
        <dbReference type="ChEBI" id="CHEBI:58207"/>
    </ligand>
</feature>
<feature type="binding site" evidence="1">
    <location>
        <position position="121"/>
    </location>
    <ligand>
        <name>5-methyltetrahydropteroyltri-L-glutamate</name>
        <dbReference type="ChEBI" id="CHEBI:58207"/>
    </ligand>
</feature>
<feature type="binding site" evidence="1">
    <location>
        <begin position="440"/>
        <end position="442"/>
    </location>
    <ligand>
        <name>L-homocysteine</name>
        <dbReference type="ChEBI" id="CHEBI:58199"/>
    </ligand>
</feature>
<feature type="binding site" evidence="1">
    <location>
        <begin position="440"/>
        <end position="442"/>
    </location>
    <ligand>
        <name>L-methionine</name>
        <dbReference type="ChEBI" id="CHEBI:57844"/>
    </ligand>
</feature>
<feature type="binding site" evidence="1">
    <location>
        <position position="493"/>
    </location>
    <ligand>
        <name>L-homocysteine</name>
        <dbReference type="ChEBI" id="CHEBI:58199"/>
    </ligand>
</feature>
<feature type="binding site" evidence="1">
    <location>
        <position position="493"/>
    </location>
    <ligand>
        <name>L-methionine</name>
        <dbReference type="ChEBI" id="CHEBI:57844"/>
    </ligand>
</feature>
<feature type="binding site" evidence="1">
    <location>
        <begin position="524"/>
        <end position="525"/>
    </location>
    <ligand>
        <name>5-methyltetrahydropteroyltri-L-glutamate</name>
        <dbReference type="ChEBI" id="CHEBI:58207"/>
    </ligand>
</feature>
<feature type="binding site" evidence="1">
    <location>
        <position position="570"/>
    </location>
    <ligand>
        <name>5-methyltetrahydropteroyltri-L-glutamate</name>
        <dbReference type="ChEBI" id="CHEBI:58207"/>
    </ligand>
</feature>
<feature type="binding site" evidence="1">
    <location>
        <position position="608"/>
    </location>
    <ligand>
        <name>L-homocysteine</name>
        <dbReference type="ChEBI" id="CHEBI:58199"/>
    </ligand>
</feature>
<feature type="binding site" evidence="1">
    <location>
        <position position="608"/>
    </location>
    <ligand>
        <name>L-methionine</name>
        <dbReference type="ChEBI" id="CHEBI:57844"/>
    </ligand>
</feature>
<feature type="binding site" evidence="1">
    <location>
        <position position="614"/>
    </location>
    <ligand>
        <name>5-methyltetrahydropteroyltri-L-glutamate</name>
        <dbReference type="ChEBI" id="CHEBI:58207"/>
    </ligand>
</feature>
<feature type="binding site" evidence="1">
    <location>
        <position position="650"/>
    </location>
    <ligand>
        <name>Zn(2+)</name>
        <dbReference type="ChEBI" id="CHEBI:29105"/>
        <note>catalytic</note>
    </ligand>
</feature>
<feature type="binding site" evidence="1">
    <location>
        <position position="652"/>
    </location>
    <ligand>
        <name>Zn(2+)</name>
        <dbReference type="ChEBI" id="CHEBI:29105"/>
        <note>catalytic</note>
    </ligand>
</feature>
<feature type="binding site" evidence="1">
    <location>
        <position position="674"/>
    </location>
    <ligand>
        <name>Zn(2+)</name>
        <dbReference type="ChEBI" id="CHEBI:29105"/>
        <note>catalytic</note>
    </ligand>
</feature>
<feature type="binding site" evidence="1">
    <location>
        <position position="735"/>
    </location>
    <ligand>
        <name>Zn(2+)</name>
        <dbReference type="ChEBI" id="CHEBI:29105"/>
        <note>catalytic</note>
    </ligand>
</feature>
<gene>
    <name evidence="1" type="primary">metE</name>
    <name type="ordered locus">Bcenmc03_4982</name>
</gene>
<accession>B1K5S8</accession>
<dbReference type="EC" id="2.1.1.14" evidence="1"/>
<dbReference type="EMBL" id="CP000959">
    <property type="protein sequence ID" value="ACA94112.1"/>
    <property type="molecule type" value="Genomic_DNA"/>
</dbReference>
<dbReference type="RefSeq" id="WP_012339390.1">
    <property type="nucleotide sequence ID" value="NC_010515.1"/>
</dbReference>
<dbReference type="SMR" id="B1K5S8"/>
<dbReference type="GeneID" id="83051691"/>
<dbReference type="KEGG" id="bcm:Bcenmc03_4982"/>
<dbReference type="HOGENOM" id="CLU_013175_0_0_4"/>
<dbReference type="UniPathway" id="UPA00051">
    <property type="reaction ID" value="UER00082"/>
</dbReference>
<dbReference type="Proteomes" id="UP000002169">
    <property type="component" value="Chromosome 2"/>
</dbReference>
<dbReference type="GO" id="GO:0003871">
    <property type="term" value="F:5-methyltetrahydropteroyltriglutamate-homocysteine S-methyltransferase activity"/>
    <property type="evidence" value="ECO:0007669"/>
    <property type="project" value="UniProtKB-UniRule"/>
</dbReference>
<dbReference type="GO" id="GO:0008270">
    <property type="term" value="F:zinc ion binding"/>
    <property type="evidence" value="ECO:0007669"/>
    <property type="project" value="InterPro"/>
</dbReference>
<dbReference type="GO" id="GO:0009086">
    <property type="term" value="P:methionine biosynthetic process"/>
    <property type="evidence" value="ECO:0007669"/>
    <property type="project" value="UniProtKB-UniRule"/>
</dbReference>
<dbReference type="GO" id="GO:0032259">
    <property type="term" value="P:methylation"/>
    <property type="evidence" value="ECO:0007669"/>
    <property type="project" value="UniProtKB-KW"/>
</dbReference>
<dbReference type="CDD" id="cd03311">
    <property type="entry name" value="CIMS_C_terminal_like"/>
    <property type="match status" value="1"/>
</dbReference>
<dbReference type="CDD" id="cd03312">
    <property type="entry name" value="CIMS_N_terminal_like"/>
    <property type="match status" value="1"/>
</dbReference>
<dbReference type="FunFam" id="3.20.20.210:FF:000002">
    <property type="entry name" value="5-methyltetrahydropteroyltriglutamate--homocysteine methyltransferase"/>
    <property type="match status" value="1"/>
</dbReference>
<dbReference type="FunFam" id="3.20.20.210:FF:000003">
    <property type="entry name" value="5-methyltetrahydropteroyltriglutamate--homocysteine methyltransferase"/>
    <property type="match status" value="1"/>
</dbReference>
<dbReference type="Gene3D" id="3.20.20.210">
    <property type="match status" value="2"/>
</dbReference>
<dbReference type="HAMAP" id="MF_00172">
    <property type="entry name" value="Meth_synth"/>
    <property type="match status" value="1"/>
</dbReference>
<dbReference type="InterPro" id="IPR013215">
    <property type="entry name" value="Cbl-indep_Met_Synth_N"/>
</dbReference>
<dbReference type="InterPro" id="IPR006276">
    <property type="entry name" value="Cobalamin-indep_Met_synthase"/>
</dbReference>
<dbReference type="InterPro" id="IPR002629">
    <property type="entry name" value="Met_Synth_C/arc"/>
</dbReference>
<dbReference type="InterPro" id="IPR038071">
    <property type="entry name" value="UROD/MetE-like_sf"/>
</dbReference>
<dbReference type="NCBIfam" id="TIGR01371">
    <property type="entry name" value="met_syn_B12ind"/>
    <property type="match status" value="1"/>
</dbReference>
<dbReference type="NCBIfam" id="NF003556">
    <property type="entry name" value="PRK05222.1"/>
    <property type="match status" value="1"/>
</dbReference>
<dbReference type="PANTHER" id="PTHR30519">
    <property type="entry name" value="5-METHYLTETRAHYDROPTEROYLTRIGLUTAMATE--HOMOCYSTEINE METHYLTRANSFERASE"/>
    <property type="match status" value="1"/>
</dbReference>
<dbReference type="Pfam" id="PF08267">
    <property type="entry name" value="Meth_synt_1"/>
    <property type="match status" value="1"/>
</dbReference>
<dbReference type="Pfam" id="PF01717">
    <property type="entry name" value="Meth_synt_2"/>
    <property type="match status" value="1"/>
</dbReference>
<dbReference type="PIRSF" id="PIRSF000382">
    <property type="entry name" value="MeTrfase_B12_ind"/>
    <property type="match status" value="1"/>
</dbReference>
<dbReference type="SUPFAM" id="SSF51726">
    <property type="entry name" value="UROD/MetE-like"/>
    <property type="match status" value="2"/>
</dbReference>
<comment type="function">
    <text evidence="1">Catalyzes the transfer of a methyl group from 5-methyltetrahydrofolate to homocysteine resulting in methionine formation.</text>
</comment>
<comment type="catalytic activity">
    <reaction evidence="1">
        <text>5-methyltetrahydropteroyltri-L-glutamate + L-homocysteine = tetrahydropteroyltri-L-glutamate + L-methionine</text>
        <dbReference type="Rhea" id="RHEA:21196"/>
        <dbReference type="ChEBI" id="CHEBI:57844"/>
        <dbReference type="ChEBI" id="CHEBI:58140"/>
        <dbReference type="ChEBI" id="CHEBI:58199"/>
        <dbReference type="ChEBI" id="CHEBI:58207"/>
        <dbReference type="EC" id="2.1.1.14"/>
    </reaction>
</comment>
<comment type="cofactor">
    <cofactor evidence="1">
        <name>Zn(2+)</name>
        <dbReference type="ChEBI" id="CHEBI:29105"/>
    </cofactor>
    <text evidence="1">Binds 1 zinc ion per subunit.</text>
</comment>
<comment type="pathway">
    <text evidence="1">Amino-acid biosynthesis; L-methionine biosynthesis via de novo pathway; L-methionine from L-homocysteine (MetE route): step 1/1.</text>
</comment>
<comment type="similarity">
    <text evidence="1">Belongs to the vitamin-B12 independent methionine synthase family.</text>
</comment>